<evidence type="ECO:0000255" key="1">
    <source>
        <dbReference type="HAMAP-Rule" id="MF_02003"/>
    </source>
</evidence>
<name>SYI_THEKO</name>
<sequence length="1065" mass="125512">MIREPEFREYNPGQLEEKIEAFWKENNTYEKVKKLRENGPKYYFLDGPPYVSGAIHLGTAWNKIIKDMIIRFRSMQGYNVRRQPGFDMHGLPIEVKVEQALKLKNKREIETKIGVDNFIKKCKEFALNNLKIMTEQFKQLGVWMDWDNPYMTIKNEYIESGWFTLKRAWEKGLLEKDKRVLHWCPRCQTALAEHEVRGEYKMRKDPSIYVKFPIEWKEKEYLLIWTTTPWTLPANLAVAAHPEYEYAKVKVETENGEEYWIMAKALVERVLSEVGVKGEIVETFKGEELEGIRYTHVLLEEYPAQKEFREKYEWAHRVILGEHVTLEDGTGLVHTAPGHGEEDFEVGQRYGLPVYSPVDDAGRYTEGKWKGVYVKDADPEIIEYLKEKGYLVKAGEIEHKYPHCWRCKTPLIFRATDQWFLKVSKVKDQIIKENDEKVTWYPEWVKVRYDNGVMNSGDWVISRQRYWGIPLPIWESEDGEYYVVGSFEELVKLAVAIEVNGERIDLPEGYEEKLKIIEEKLGPEDLHRPYVDAFIIKVNGKEMKRVKDVVDVWFDSGIASWASLDYPRNKELFEKLWPADFIVEGEDQVTKWFYSQQAASVIAFDTVPYRAVAMHGYVLDEKGDKMSKSLGNIIRPEEVVQKEGRDPFRFYMLWATNPWENLRFSWKGLEQVKRMLNILWNVYVLSATYMSLDNFNPTKVNPEELPFREEDRWILSRVNSLIGEVTDGIETFRLTRATRGIYNFVVEDLSRWYIRLIRKRMWVEGDDPDKLAAYYTVWKVFDVLLRLMAPFTPYIAEEIYQNLIRPFVGVESVHMLDWPEADEKAIDEELEKEMEYARKIVEAGSSARQKARIKLRYPVRRIIIETEDETVKKAVERINRILRDQLNAKEVVVGKVERELIIKPNFAKVGPEFKGDAKKVIAWISEHGRELYEKGEMDVEIEGKTFHITREHVTIEEKLPDFFVAEEFDGGRVFVDKTLTRELLAEGLAREFVRRIQEMRKRLDLDVNDRIVVTIETTDENRELLQENLDYIMRETRAVEVRFEEAKGYVVEWPEVQAKIGIEKV</sequence>
<keyword id="KW-0030">Aminoacyl-tRNA synthetase</keyword>
<keyword id="KW-0067">ATP-binding</keyword>
<keyword id="KW-0963">Cytoplasm</keyword>
<keyword id="KW-0436">Ligase</keyword>
<keyword id="KW-0479">Metal-binding</keyword>
<keyword id="KW-0547">Nucleotide-binding</keyword>
<keyword id="KW-0648">Protein biosynthesis</keyword>
<keyword id="KW-1185">Reference proteome</keyword>
<keyword id="KW-0862">Zinc</keyword>
<gene>
    <name evidence="1" type="primary">ileS</name>
    <name type="ordered locus">TK1748</name>
</gene>
<dbReference type="EC" id="6.1.1.5" evidence="1"/>
<dbReference type="EMBL" id="AP006878">
    <property type="protein sequence ID" value="BAD85937.1"/>
    <property type="molecule type" value="Genomic_DNA"/>
</dbReference>
<dbReference type="RefSeq" id="WP_011250699.1">
    <property type="nucleotide sequence ID" value="NC_006624.1"/>
</dbReference>
<dbReference type="SMR" id="Q5JJ31"/>
<dbReference type="FunCoup" id="Q5JJ31">
    <property type="interactions" value="209"/>
</dbReference>
<dbReference type="STRING" id="69014.TK1748"/>
<dbReference type="EnsemblBacteria" id="BAD85937">
    <property type="protein sequence ID" value="BAD85937"/>
    <property type="gene ID" value="TK1748"/>
</dbReference>
<dbReference type="GeneID" id="78448278"/>
<dbReference type="KEGG" id="tko:TK1748"/>
<dbReference type="PATRIC" id="fig|69014.16.peg.1704"/>
<dbReference type="eggNOG" id="arCOG00807">
    <property type="taxonomic scope" value="Archaea"/>
</dbReference>
<dbReference type="HOGENOM" id="CLU_001493_1_1_2"/>
<dbReference type="InParanoid" id="Q5JJ31"/>
<dbReference type="OrthoDB" id="30823at2157"/>
<dbReference type="PhylomeDB" id="Q5JJ31"/>
<dbReference type="Proteomes" id="UP000000536">
    <property type="component" value="Chromosome"/>
</dbReference>
<dbReference type="GO" id="GO:0005829">
    <property type="term" value="C:cytosol"/>
    <property type="evidence" value="ECO:0000318"/>
    <property type="project" value="GO_Central"/>
</dbReference>
<dbReference type="GO" id="GO:0002161">
    <property type="term" value="F:aminoacyl-tRNA deacylase activity"/>
    <property type="evidence" value="ECO:0007669"/>
    <property type="project" value="InterPro"/>
</dbReference>
<dbReference type="GO" id="GO:0005524">
    <property type="term" value="F:ATP binding"/>
    <property type="evidence" value="ECO:0007669"/>
    <property type="project" value="UniProtKB-UniRule"/>
</dbReference>
<dbReference type="GO" id="GO:0004822">
    <property type="term" value="F:isoleucine-tRNA ligase activity"/>
    <property type="evidence" value="ECO:0000318"/>
    <property type="project" value="GO_Central"/>
</dbReference>
<dbReference type="GO" id="GO:0000049">
    <property type="term" value="F:tRNA binding"/>
    <property type="evidence" value="ECO:0007669"/>
    <property type="project" value="InterPro"/>
</dbReference>
<dbReference type="GO" id="GO:0008270">
    <property type="term" value="F:zinc ion binding"/>
    <property type="evidence" value="ECO:0007669"/>
    <property type="project" value="UniProtKB-UniRule"/>
</dbReference>
<dbReference type="GO" id="GO:0006428">
    <property type="term" value="P:isoleucyl-tRNA aminoacylation"/>
    <property type="evidence" value="ECO:0000318"/>
    <property type="project" value="GO_Central"/>
</dbReference>
<dbReference type="CDD" id="cd07961">
    <property type="entry name" value="Anticodon_Ia_Ile_ABEc"/>
    <property type="match status" value="1"/>
</dbReference>
<dbReference type="CDD" id="cd00818">
    <property type="entry name" value="IleRS_core"/>
    <property type="match status" value="1"/>
</dbReference>
<dbReference type="FunFam" id="3.30.720.200:FF:000001">
    <property type="entry name" value="Glycine--tRNA ligase 2"/>
    <property type="match status" value="1"/>
</dbReference>
<dbReference type="FunFam" id="3.40.50.620:FF:000325">
    <property type="entry name" value="Isoleucine--tRNA ligase"/>
    <property type="match status" value="1"/>
</dbReference>
<dbReference type="FunFam" id="1.10.730.10:FF:000033">
    <property type="entry name" value="Valine--tRNA ligase"/>
    <property type="match status" value="1"/>
</dbReference>
<dbReference type="Gene3D" id="3.30.720.200">
    <property type="match status" value="1"/>
</dbReference>
<dbReference type="Gene3D" id="3.40.50.620">
    <property type="entry name" value="HUPs"/>
    <property type="match status" value="2"/>
</dbReference>
<dbReference type="Gene3D" id="1.10.730.10">
    <property type="entry name" value="Isoleucyl-tRNA Synthetase, Domain 1"/>
    <property type="match status" value="1"/>
</dbReference>
<dbReference type="Gene3D" id="3.90.740.10">
    <property type="entry name" value="Valyl/Leucyl/Isoleucyl-tRNA synthetase, editing domain"/>
    <property type="match status" value="1"/>
</dbReference>
<dbReference type="HAMAP" id="MF_02003">
    <property type="entry name" value="Ile_tRNA_synth_type2"/>
    <property type="match status" value="1"/>
</dbReference>
<dbReference type="InterPro" id="IPR001412">
    <property type="entry name" value="aa-tRNA-synth_I_CS"/>
</dbReference>
<dbReference type="InterPro" id="IPR002300">
    <property type="entry name" value="aa-tRNA-synth_Ia"/>
</dbReference>
<dbReference type="InterPro" id="IPR033709">
    <property type="entry name" value="Anticodon_Ile_ABEc"/>
</dbReference>
<dbReference type="InterPro" id="IPR002301">
    <property type="entry name" value="Ile-tRNA-ligase"/>
</dbReference>
<dbReference type="InterPro" id="IPR023586">
    <property type="entry name" value="Ile-tRNA-ligase_type2"/>
</dbReference>
<dbReference type="InterPro" id="IPR013155">
    <property type="entry name" value="M/V/L/I-tRNA-synth_anticd-bd"/>
</dbReference>
<dbReference type="InterPro" id="IPR014729">
    <property type="entry name" value="Rossmann-like_a/b/a_fold"/>
</dbReference>
<dbReference type="InterPro" id="IPR009080">
    <property type="entry name" value="tRNAsynth_Ia_anticodon-bd"/>
</dbReference>
<dbReference type="InterPro" id="IPR009008">
    <property type="entry name" value="Val/Leu/Ile-tRNA-synth_edit"/>
</dbReference>
<dbReference type="NCBIfam" id="TIGR00392">
    <property type="entry name" value="ileS"/>
    <property type="match status" value="1"/>
</dbReference>
<dbReference type="PANTHER" id="PTHR42780:SF1">
    <property type="entry name" value="ISOLEUCINE--TRNA LIGASE, CYTOPLASMIC"/>
    <property type="match status" value="1"/>
</dbReference>
<dbReference type="PANTHER" id="PTHR42780">
    <property type="entry name" value="SOLEUCYL-TRNA SYNTHETASE"/>
    <property type="match status" value="1"/>
</dbReference>
<dbReference type="Pfam" id="PF08264">
    <property type="entry name" value="Anticodon_1"/>
    <property type="match status" value="1"/>
</dbReference>
<dbReference type="Pfam" id="PF19302">
    <property type="entry name" value="DUF5915"/>
    <property type="match status" value="1"/>
</dbReference>
<dbReference type="Pfam" id="PF00133">
    <property type="entry name" value="tRNA-synt_1"/>
    <property type="match status" value="1"/>
</dbReference>
<dbReference type="PRINTS" id="PR00984">
    <property type="entry name" value="TRNASYNTHILE"/>
</dbReference>
<dbReference type="SUPFAM" id="SSF47323">
    <property type="entry name" value="Anticodon-binding domain of a subclass of class I aminoacyl-tRNA synthetases"/>
    <property type="match status" value="2"/>
</dbReference>
<dbReference type="SUPFAM" id="SSF52374">
    <property type="entry name" value="Nucleotidylyl transferase"/>
    <property type="match status" value="1"/>
</dbReference>
<dbReference type="SUPFAM" id="SSF50677">
    <property type="entry name" value="ValRS/IleRS/LeuRS editing domain"/>
    <property type="match status" value="1"/>
</dbReference>
<dbReference type="PROSITE" id="PS00178">
    <property type="entry name" value="AA_TRNA_LIGASE_I"/>
    <property type="match status" value="1"/>
</dbReference>
<accession>Q5JJ31</accession>
<feature type="chain" id="PRO_0000098591" description="Isoleucine--tRNA ligase">
    <location>
        <begin position="1"/>
        <end position="1065"/>
    </location>
</feature>
<feature type="short sequence motif" description="'HIGH' region">
    <location>
        <begin position="49"/>
        <end position="59"/>
    </location>
</feature>
<feature type="short sequence motif" description="'KMSKS' region">
    <location>
        <begin position="625"/>
        <end position="629"/>
    </location>
</feature>
<feature type="binding site" evidence="1">
    <location>
        <position position="628"/>
    </location>
    <ligand>
        <name>ATP</name>
        <dbReference type="ChEBI" id="CHEBI:30616"/>
    </ligand>
</feature>
<proteinExistence type="inferred from homology"/>
<reference key="1">
    <citation type="journal article" date="2005" name="Genome Res.">
        <title>Complete genome sequence of the hyperthermophilic archaeon Thermococcus kodakaraensis KOD1 and comparison with Pyrococcus genomes.</title>
        <authorList>
            <person name="Fukui T."/>
            <person name="Atomi H."/>
            <person name="Kanai T."/>
            <person name="Matsumi R."/>
            <person name="Fujiwara S."/>
            <person name="Imanaka T."/>
        </authorList>
    </citation>
    <scope>NUCLEOTIDE SEQUENCE [LARGE SCALE GENOMIC DNA]</scope>
    <source>
        <strain>ATCC BAA-918 / JCM 12380 / KOD1</strain>
    </source>
</reference>
<comment type="function">
    <text evidence="1">Catalyzes the attachment of isoleucine to tRNA(Ile). As IleRS can inadvertently accommodate and process structurally similar amino acids such as valine, to avoid such errors it has two additional distinct tRNA(Ile)-dependent editing activities. One activity is designated as 'pretransfer' editing and involves the hydrolysis of activated Val-AMP. The other activity is designated 'posttransfer' editing and involves deacylation of mischarged Val-tRNA(Ile).</text>
</comment>
<comment type="catalytic activity">
    <reaction evidence="1">
        <text>tRNA(Ile) + L-isoleucine + ATP = L-isoleucyl-tRNA(Ile) + AMP + diphosphate</text>
        <dbReference type="Rhea" id="RHEA:11060"/>
        <dbReference type="Rhea" id="RHEA-COMP:9666"/>
        <dbReference type="Rhea" id="RHEA-COMP:9695"/>
        <dbReference type="ChEBI" id="CHEBI:30616"/>
        <dbReference type="ChEBI" id="CHEBI:33019"/>
        <dbReference type="ChEBI" id="CHEBI:58045"/>
        <dbReference type="ChEBI" id="CHEBI:78442"/>
        <dbReference type="ChEBI" id="CHEBI:78528"/>
        <dbReference type="ChEBI" id="CHEBI:456215"/>
        <dbReference type="EC" id="6.1.1.5"/>
    </reaction>
</comment>
<comment type="cofactor">
    <cofactor evidence="1">
        <name>Zn(2+)</name>
        <dbReference type="ChEBI" id="CHEBI:29105"/>
    </cofactor>
</comment>
<comment type="subunit">
    <text evidence="1">Monomer.</text>
</comment>
<comment type="subcellular location">
    <subcellularLocation>
        <location evidence="1">Cytoplasm</location>
    </subcellularLocation>
</comment>
<comment type="domain">
    <text evidence="1">IleRS has two distinct active sites: one for aminoacylation and one for editing. The misactivated valine is translocated from the active site to the editing site, which sterically excludes the correctly activated isoleucine. The single editing site contains two valyl binding pockets, one specific for each substrate (Val-AMP or Val-tRNA(Ile)).</text>
</comment>
<comment type="similarity">
    <text evidence="1">Belongs to the class-I aminoacyl-tRNA synthetase family. IleS type 2 subfamily.</text>
</comment>
<protein>
    <recommendedName>
        <fullName evidence="1">Isoleucine--tRNA ligase</fullName>
        <ecNumber evidence="1">6.1.1.5</ecNumber>
    </recommendedName>
    <alternativeName>
        <fullName evidence="1">Isoleucyl-tRNA synthetase</fullName>
        <shortName evidence="1">IleRS</shortName>
    </alternativeName>
</protein>
<organism>
    <name type="scientific">Thermococcus kodakarensis (strain ATCC BAA-918 / JCM 12380 / KOD1)</name>
    <name type="common">Pyrococcus kodakaraensis (strain KOD1)</name>
    <dbReference type="NCBI Taxonomy" id="69014"/>
    <lineage>
        <taxon>Archaea</taxon>
        <taxon>Methanobacteriati</taxon>
        <taxon>Methanobacteriota</taxon>
        <taxon>Thermococci</taxon>
        <taxon>Thermococcales</taxon>
        <taxon>Thermococcaceae</taxon>
        <taxon>Thermococcus</taxon>
    </lineage>
</organism>